<sequence>MSACSDFVEHIWKPGSCKNCFCLRSDHQLTAGHPKARASSLPAGARLPARPEICRLEDEGVNGLAYSKPTIAVKPTMMTSETADLWTEASLSAEVPKVNWRRTPGKLLLQKQEDGPIVYLGSFRGMQKAAGPLACTDSNSRCPPAYTMVGLHNLEARVDRNTALQPVNFQEEKAGREELPSAQESFRQKLAAFTGMTSSCLKGPRPCTSPQPLRESLPSEDDSDQRCSPSGDSEGGEYCSILDCRPESRDAVHNTEGSGRRRGDCSPICWEQGTCTRPTEEEKQALNFPRECCGQGSTANPPHLGPKKPSLNSEAASSSDGLSCGSSRSGANSPFAPHLENDYCSLVKEPTSVKQQDSGCHLVNSGKYVGQAVDLQPPALPREAVQPEPIYAESAKRKKAAPVPQRPEPKKEQVSSGQVWTGDTWSQKTPSGWSQEREGPNAAPQVATTITVIAAHPEEDHRTIYLSSPDSAVGVQWPRGSLNQDLHGSGEEPLVVQGLSSRESHPHNMTENSSKEKPAIPPKLSKSSPGGSPVSPAAPPLTDHSDGNTSGSSVGSQPSSRVPTNLTSSCQTNGVAAGDPAKCPPQANSSVLDQRRPRYQTGAWSRQCRIEEEEEVGQELLSQSWGRELENGIADHSNSSTWHRLHPIDGASGQNGKTNSGMSKSASFAFEFPKDRGRLESFSPPPPPPKSRHLLKMNKSSSDLEKVSQSSAESLSPSFRGAHVSFTTGSTDSLASDSRTCSDGGPSCEATHSPTISGKKLFAPVPFPSGSTEDVSPSGPAQPPPLPQKKIVSRAASSPDGFFWTQGSPKPRTASPKLNLSHSETNVCAHDEPPLSYSLNSGNHPHHVFSSSEPLEKAFKGSVPWAPALGPANSKGGCGSPNLQGRAATSTSSSQLSVSSQASTGSSQLQLHSLLSSISSKEGTYAKLGGLYTQSLARLVTKCEDLFMGGLKTELRFDENSWSLFKLICNKPCCDSGDAIYYGATCSKDPDSIYAVKICKTPEPKSASYCSPSVPVHFNIQQDCGHFVASVPSSMLAFPDTSSKDPAPAAPSHTPAQEQDCVVVITREVPHQTASDFVRDSVASHRAEPEVYERRVCFLLLQLCNGLEHLKEHGIIHRDLCLENLLLVHCNPQSSPGPSANPSVPTTTSRCPSAAPAATTACQGGPGEKHLPRLIISNFLKAKQKPGGTTNLQQKKSQARLAPEIVSASQYRKFDEFQTGILIYELLHQPNPFEVRAQLRERDYRREDLPPLPTLSLYSPGLQQLAHLLLEADPIKRIRIGEAKRVLQCLLWGPRRELVEQPCPSEEVLCNTLHNWIDMKRALMMMKFAEKAVERRRGVELEDWLCCQYLASAEPGALLQSLKLLQLL</sequence>
<protein>
    <recommendedName>
        <fullName evidence="10">Inactive tyrosine-protein kinase PRAG1</fullName>
    </recommendedName>
    <alternativeName>
        <fullName>PEAK1-related kinase-activating pseudokinase 1</fullName>
    </alternativeName>
    <alternativeName>
        <fullName evidence="9">Pragma of Rnd2</fullName>
    </alternativeName>
</protein>
<comment type="function">
    <text evidence="1 5 6 7 8">Catalytically inactive protein kinase that acts as a scaffold protein (PubMed:29503074). Functions as an effector of the small GTPase RND2, which stimulates RhoA activity and inhibits NGF-induced neurite outgrowth (PubMed:16481321). Promotes Src family kinase (SFK) signallig by regulating the subcellular localization of CSK, a negative regulator of these kinases, leading to the regulation of cell morphology and motility by a CSK-dependent mechanism (PubMed:21873224, PubMed:27116701). Acts as a critical coactivator of Notch signaling (By similarity).</text>
</comment>
<comment type="subunit">
    <text evidence="1 5 6 7 8">Homodimer (PubMed:29503074). Dimerization leads to the catalytic activation of CSK (PubMed:29503074). Interacts (via C-terminus) with RND2 (PubMed:16481321). Interacts with CSK (via SH2 domain) in a Tyr-391 phosphorylation-dependent manner; this interaction potentiates kinase activity of CSK (PubMed:21873224, PubMed:27116701, PubMed:29503074). Interacts with NOTCH1 intracellular domain (N1ICD) (By similarity). Forms a complex with N1ICD and MAML1, in a MAML1-dependent manner (By similarity).</text>
</comment>
<comment type="subcellular location">
    <subcellularLocation>
        <location evidence="6 7">Cytoplasm</location>
    </subcellularLocation>
    <subcellularLocation>
        <location evidence="1">Nucleus</location>
    </subcellularLocation>
    <subcellularLocation>
        <location evidence="7">Cell junction</location>
        <location evidence="7">Focal adhesion</location>
    </subcellularLocation>
    <text evidence="1">Colocalized with NOTCH1 in the nucleus.</text>
</comment>
<comment type="tissue specificity">
    <text evidence="5">Highly-expressed in brain, including cortical and hippocampal pyramidal neurons, as well as in kidney, spleen, colon and small intestine (PubMed:16481321).</text>
</comment>
<comment type="domain">
    <text evidence="8">The dimerization region encompasses helices both from the N- and C-terminal of the protein kinase domain.</text>
</comment>
<comment type="PTM">
    <text evidence="7">Phosphorylated by CSK on Tyr-238, Tyr-343, and Tyr-391; Tyr-391 is a primary site of phosphorylation.</text>
</comment>
<comment type="similarity">
    <text evidence="10">Belongs to the protein kinase superfamily.</text>
</comment>
<comment type="caution">
    <text evidence="8">Despite of the presence of a putative ATP-binding motif, this protein does not bind ATP, suggesting that it has no protein kinase activity (PubMed:29503074).</text>
</comment>
<feature type="chain" id="PRO_0000444634" description="Inactive tyrosine-protein kinase PRAG1">
    <location>
        <begin position="1"/>
        <end position="1368"/>
    </location>
</feature>
<feature type="domain" description="Protein kinase" evidence="3">
    <location>
        <begin position="940"/>
        <end position="1291"/>
    </location>
</feature>
<feature type="region of interest" description="Disordered" evidence="4">
    <location>
        <begin position="200"/>
        <end position="236"/>
    </location>
</feature>
<feature type="region of interest" description="Disordered" evidence="4">
    <location>
        <begin position="297"/>
        <end position="330"/>
    </location>
</feature>
<feature type="region of interest" description="Disordered" evidence="4">
    <location>
        <begin position="392"/>
        <end position="443"/>
    </location>
</feature>
<feature type="region of interest" description="Disordered" evidence="4">
    <location>
        <begin position="499"/>
        <end position="605"/>
    </location>
</feature>
<feature type="region of interest" description="Disordered" evidence="4">
    <location>
        <begin position="636"/>
        <end position="792"/>
    </location>
</feature>
<feature type="region of interest" description="Disordered" evidence="4">
    <location>
        <begin position="799"/>
        <end position="818"/>
    </location>
</feature>
<feature type="region of interest" description="Disordered" evidence="4">
    <location>
        <begin position="873"/>
        <end position="901"/>
    </location>
</feature>
<feature type="region of interest" description="Required for homodimerization" evidence="8">
    <location>
        <begin position="906"/>
        <end position="949"/>
    </location>
</feature>
<feature type="region of interest" description="Disordered" evidence="4">
    <location>
        <begin position="1134"/>
        <end position="1166"/>
    </location>
</feature>
<feature type="region of interest" description="Required for homodimerization" evidence="8">
    <location>
        <begin position="1293"/>
        <end position="1368"/>
    </location>
</feature>
<feature type="compositionally biased region" description="Low complexity" evidence="4">
    <location>
        <begin position="317"/>
        <end position="330"/>
    </location>
</feature>
<feature type="compositionally biased region" description="Polar residues" evidence="4">
    <location>
        <begin position="414"/>
        <end position="434"/>
    </location>
</feature>
<feature type="compositionally biased region" description="Basic and acidic residues" evidence="4">
    <location>
        <begin position="502"/>
        <end position="518"/>
    </location>
</feature>
<feature type="compositionally biased region" description="Low complexity" evidence="4">
    <location>
        <begin position="522"/>
        <end position="535"/>
    </location>
</feature>
<feature type="compositionally biased region" description="Low complexity" evidence="4">
    <location>
        <begin position="550"/>
        <end position="563"/>
    </location>
</feature>
<feature type="compositionally biased region" description="Polar residues" evidence="4">
    <location>
        <begin position="564"/>
        <end position="574"/>
    </location>
</feature>
<feature type="compositionally biased region" description="Polar residues" evidence="4">
    <location>
        <begin position="652"/>
        <end position="666"/>
    </location>
</feature>
<feature type="compositionally biased region" description="Polar residues" evidence="4">
    <location>
        <begin position="707"/>
        <end position="717"/>
    </location>
</feature>
<feature type="compositionally biased region" description="Polar residues" evidence="4">
    <location>
        <begin position="725"/>
        <end position="741"/>
    </location>
</feature>
<feature type="compositionally biased region" description="Low complexity" evidence="4">
    <location>
        <begin position="887"/>
        <end position="901"/>
    </location>
</feature>
<feature type="compositionally biased region" description="Polar residues" evidence="4">
    <location>
        <begin position="1134"/>
        <end position="1144"/>
    </location>
</feature>
<feature type="compositionally biased region" description="Low complexity" evidence="4">
    <location>
        <begin position="1145"/>
        <end position="1162"/>
    </location>
</feature>
<feature type="modified residue" description="Phosphotyrosine; by CSK" evidence="7">
    <location>
        <position position="238"/>
    </location>
</feature>
<feature type="modified residue" description="Phosphotyrosine; by CSK" evidence="7">
    <location>
        <position position="343"/>
    </location>
</feature>
<feature type="modified residue" description="Phosphotyrosine; by CSK" evidence="6 7 8">
    <location>
        <position position="391"/>
    </location>
</feature>
<feature type="modified residue" description="Phosphoserine" evidence="2">
    <location>
        <position position="667"/>
    </location>
</feature>
<feature type="modified residue" description="Phosphoserine" evidence="2">
    <location>
        <position position="716"/>
    </location>
</feature>
<feature type="modified residue" description="Phosphoserine" evidence="2">
    <location>
        <position position="753"/>
    </location>
</feature>
<feature type="modified residue" description="Phosphoserine" evidence="2">
    <location>
        <position position="797"/>
    </location>
</feature>
<feature type="mutagenesis site" description="Does not affect cytoplasmic localization." evidence="6">
    <original>Y</original>
    <variation>A</variation>
    <location>
        <position position="391"/>
    </location>
</feature>
<feature type="mutagenesis site" description="Decreases the interaction with CSK." evidence="6 8">
    <original>Y</original>
    <variation>F</variation>
    <location>
        <position position="391"/>
    </location>
</feature>
<feature type="mutagenesis site" description="Does not affect homodimerization." evidence="8">
    <original>L</original>
    <variation>E</variation>
    <location>
        <position position="939"/>
    </location>
</feature>
<feature type="mutagenesis site" description="No ATP-binding activity." evidence="8">
    <original>D</original>
    <variation>N</variation>
    <location>
        <position position="978"/>
    </location>
</feature>
<feature type="mutagenesis site" description="No ATP-binding activity." evidence="8">
    <original>Y</original>
    <variation>F</variation>
    <location>
        <position position="981"/>
    </location>
</feature>
<feature type="mutagenesis site" description="Does not affect PRAG1-CSK complex formation. Does not affect PRAG1-induced protein tyrosine phosphorylation." evidence="8">
    <original>K</original>
    <variation>A</variation>
    <location>
        <position position="997"/>
    </location>
</feature>
<feature type="mutagenesis site" description="No ATP-binding activity." evidence="8">
    <original>Q</original>
    <variation>E</variation>
    <location>
        <position position="1021"/>
    </location>
</feature>
<feature type="mutagenesis site" description="Strong reduction of homodimerization; Does not affect PRAG1-CSK complex formation. Reduces CSK activation." evidence="8">
    <original>A</original>
    <variation>E</variation>
    <location>
        <position position="1329"/>
    </location>
</feature>
<feature type="mutagenesis site" description="Does not affect homodimerization." evidence="8">
    <original>Y</original>
    <variation>E</variation>
    <location>
        <position position="1349"/>
    </location>
</feature>
<feature type="mutagenesis site" description="Does not affect homodimerization." evidence="8">
    <original>L</original>
    <variation>E</variation>
    <location>
        <position position="1362"/>
    </location>
</feature>
<feature type="helix" evidence="14">
    <location>
        <begin position="921"/>
        <end position="946"/>
    </location>
</feature>
<feature type="helix" evidence="14">
    <location>
        <begin position="962"/>
        <end position="964"/>
    </location>
</feature>
<feature type="strand" evidence="14">
    <location>
        <begin position="965"/>
        <end position="967"/>
    </location>
</feature>
<feature type="strand" evidence="14">
    <location>
        <begin position="977"/>
        <end position="989"/>
    </location>
</feature>
<feature type="strand" evidence="14">
    <location>
        <begin position="994"/>
        <end position="999"/>
    </location>
</feature>
<feature type="strand" evidence="14">
    <location>
        <begin position="1026"/>
        <end position="1031"/>
    </location>
</feature>
<feature type="helix" evidence="14">
    <location>
        <begin position="1033"/>
        <end position="1035"/>
    </location>
</feature>
<feature type="strand" evidence="14">
    <location>
        <begin position="1059"/>
        <end position="1068"/>
    </location>
</feature>
<feature type="strand" evidence="14">
    <location>
        <begin position="1070"/>
        <end position="1073"/>
    </location>
</feature>
<feature type="helix" evidence="14">
    <location>
        <begin position="1074"/>
        <end position="1080"/>
    </location>
</feature>
<feature type="helix" evidence="14">
    <location>
        <begin position="1082"/>
        <end position="1087"/>
    </location>
</feature>
<feature type="helix" evidence="14">
    <location>
        <begin position="1089"/>
        <end position="1112"/>
    </location>
</feature>
<feature type="strand" evidence="14">
    <location>
        <begin position="1124"/>
        <end position="1128"/>
    </location>
</feature>
<feature type="strand" evidence="14">
    <location>
        <begin position="1173"/>
        <end position="1176"/>
    </location>
</feature>
<feature type="helix" evidence="14">
    <location>
        <begin position="1203"/>
        <end position="1206"/>
    </location>
</feature>
<feature type="helix" evidence="14">
    <location>
        <begin position="1209"/>
        <end position="1211"/>
    </location>
</feature>
<feature type="helix" evidence="14">
    <location>
        <begin position="1214"/>
        <end position="1226"/>
    </location>
</feature>
<feature type="helix" evidence="14">
    <location>
        <begin position="1258"/>
        <end position="1269"/>
    </location>
</feature>
<feature type="turn" evidence="14">
    <location>
        <begin position="1274"/>
        <end position="1276"/>
    </location>
</feature>
<feature type="helix" evidence="14">
    <location>
        <begin position="1280"/>
        <end position="1292"/>
    </location>
</feature>
<feature type="helix" evidence="14">
    <location>
        <begin position="1296"/>
        <end position="1300"/>
    </location>
</feature>
<feature type="helix" evidence="14">
    <location>
        <begin position="1306"/>
        <end position="1332"/>
    </location>
</feature>
<feature type="helix" evidence="14">
    <location>
        <begin position="1341"/>
        <end position="1352"/>
    </location>
</feature>
<feature type="helix" evidence="14">
    <location>
        <begin position="1355"/>
        <end position="1364"/>
    </location>
</feature>
<organism>
    <name type="scientific">Rattus norvegicus</name>
    <name type="common">Rat</name>
    <dbReference type="NCBI Taxonomy" id="10116"/>
    <lineage>
        <taxon>Eukaryota</taxon>
        <taxon>Metazoa</taxon>
        <taxon>Chordata</taxon>
        <taxon>Craniata</taxon>
        <taxon>Vertebrata</taxon>
        <taxon>Euteleostomi</taxon>
        <taxon>Mammalia</taxon>
        <taxon>Eutheria</taxon>
        <taxon>Euarchontoglires</taxon>
        <taxon>Glires</taxon>
        <taxon>Rodentia</taxon>
        <taxon>Myomorpha</taxon>
        <taxon>Muroidea</taxon>
        <taxon>Muridae</taxon>
        <taxon>Murinae</taxon>
        <taxon>Rattus</taxon>
    </lineage>
</organism>
<gene>
    <name evidence="11" type="primary">Prag1</name>
    <name evidence="9" type="synonym">Pragmin</name>
</gene>
<dbReference type="EMBL" id="AABR07026025">
    <property type="status" value="NOT_ANNOTATED_CDS"/>
    <property type="molecule type" value="Genomic_DNA"/>
</dbReference>
<dbReference type="EMBL" id="AABR07026026">
    <property type="status" value="NOT_ANNOTATED_CDS"/>
    <property type="molecule type" value="Genomic_DNA"/>
</dbReference>
<dbReference type="EMBL" id="CH473970">
    <property type="protein sequence ID" value="EDM09203.1"/>
    <property type="molecule type" value="Genomic_DNA"/>
</dbReference>
<dbReference type="RefSeq" id="NP_001100785.1">
    <property type="nucleotide sequence ID" value="NM_001107315.1"/>
</dbReference>
<dbReference type="RefSeq" id="XP_017455620.1">
    <property type="nucleotide sequence ID" value="XM_017600131.1"/>
</dbReference>
<dbReference type="RefSeq" id="XP_017455621.1">
    <property type="nucleotide sequence ID" value="XM_017600132.1"/>
</dbReference>
<dbReference type="RefSeq" id="XP_038950470.1">
    <property type="nucleotide sequence ID" value="XM_039094542.2"/>
</dbReference>
<dbReference type="PDB" id="6EWX">
    <property type="method" value="X-ray"/>
    <property type="resolution" value="2.77 A"/>
    <property type="chains" value="A/B=906-1368"/>
</dbReference>
<dbReference type="PDBsum" id="6EWX"/>
<dbReference type="SMR" id="D3ZMK9"/>
<dbReference type="ELM" id="D3ZMK9"/>
<dbReference type="FunCoup" id="D3ZMK9">
    <property type="interactions" value="1723"/>
</dbReference>
<dbReference type="IntAct" id="D3ZMK9">
    <property type="interactions" value="2"/>
</dbReference>
<dbReference type="STRING" id="10116.ENSRNOP00000015166"/>
<dbReference type="iPTMnet" id="D3ZMK9"/>
<dbReference type="PhosphoSitePlus" id="D3ZMK9"/>
<dbReference type="PaxDb" id="10116-ENSRNOP00000015166"/>
<dbReference type="Ensembl" id="ENSRNOT00000015166.7">
    <property type="protein sequence ID" value="ENSRNOP00000015166.5"/>
    <property type="gene ID" value="ENSRNOG00000011407.7"/>
</dbReference>
<dbReference type="GeneID" id="306506"/>
<dbReference type="KEGG" id="rno:306506"/>
<dbReference type="AGR" id="RGD:1311793"/>
<dbReference type="CTD" id="157285"/>
<dbReference type="RGD" id="1311793">
    <property type="gene designation" value="Prag1"/>
</dbReference>
<dbReference type="eggNOG" id="ENOG502QVUZ">
    <property type="taxonomic scope" value="Eukaryota"/>
</dbReference>
<dbReference type="GeneTree" id="ENSGT00940000157066"/>
<dbReference type="HOGENOM" id="CLU_005467_0_0_1"/>
<dbReference type="InParanoid" id="D3ZMK9"/>
<dbReference type="OMA" id="DLKMSAC"/>
<dbReference type="OrthoDB" id="76170at9989"/>
<dbReference type="PhylomeDB" id="D3ZMK9"/>
<dbReference type="TreeFam" id="TF331193"/>
<dbReference type="Reactome" id="R-RNO-9696270">
    <property type="pathway name" value="RND2 GTPase cycle"/>
</dbReference>
<dbReference type="PRO" id="PR:D3ZMK9"/>
<dbReference type="Proteomes" id="UP000002494">
    <property type="component" value="Chromosome 16"/>
</dbReference>
<dbReference type="Proteomes" id="UP000234681">
    <property type="component" value="Chromosome 16"/>
</dbReference>
<dbReference type="Bgee" id="ENSRNOG00000011407">
    <property type="expression patterns" value="Expressed in cerebellum and 18 other cell types or tissues"/>
</dbReference>
<dbReference type="GO" id="GO:0005737">
    <property type="term" value="C:cytoplasm"/>
    <property type="evidence" value="ECO:0000314"/>
    <property type="project" value="UniProtKB"/>
</dbReference>
<dbReference type="GO" id="GO:0005925">
    <property type="term" value="C:focal adhesion"/>
    <property type="evidence" value="ECO:0000314"/>
    <property type="project" value="UniProtKB"/>
</dbReference>
<dbReference type="GO" id="GO:0005634">
    <property type="term" value="C:nucleus"/>
    <property type="evidence" value="ECO:0000250"/>
    <property type="project" value="UniProtKB"/>
</dbReference>
<dbReference type="GO" id="GO:0042802">
    <property type="term" value="F:identical protein binding"/>
    <property type="evidence" value="ECO:0000315"/>
    <property type="project" value="UniProtKB"/>
</dbReference>
<dbReference type="GO" id="GO:0004672">
    <property type="term" value="F:protein kinase activity"/>
    <property type="evidence" value="ECO:0000318"/>
    <property type="project" value="GO_Central"/>
</dbReference>
<dbReference type="GO" id="GO:0016477">
    <property type="term" value="P:cell migration"/>
    <property type="evidence" value="ECO:0000266"/>
    <property type="project" value="RGD"/>
</dbReference>
<dbReference type="GO" id="GO:0010977">
    <property type="term" value="P:negative regulation of neuron projection development"/>
    <property type="evidence" value="ECO:0000315"/>
    <property type="project" value="UniProtKB"/>
</dbReference>
<dbReference type="GO" id="GO:0035025">
    <property type="term" value="P:positive regulation of Rho protein signal transduction"/>
    <property type="evidence" value="ECO:0000315"/>
    <property type="project" value="UniProtKB"/>
</dbReference>
<dbReference type="GO" id="GO:2000145">
    <property type="term" value="P:regulation of cell motility"/>
    <property type="evidence" value="ECO:0000315"/>
    <property type="project" value="UniProtKB"/>
</dbReference>
<dbReference type="GO" id="GO:0008360">
    <property type="term" value="P:regulation of cell shape"/>
    <property type="evidence" value="ECO:0000315"/>
    <property type="project" value="UniProtKB"/>
</dbReference>
<dbReference type="GO" id="GO:0008593">
    <property type="term" value="P:regulation of Notch signaling pathway"/>
    <property type="evidence" value="ECO:0000250"/>
    <property type="project" value="UniProtKB"/>
</dbReference>
<dbReference type="FunFam" id="1.10.510.10:FF:000510">
    <property type="entry name" value="Inactive tyrosine-protein kinase PRAG1"/>
    <property type="match status" value="1"/>
</dbReference>
<dbReference type="Gene3D" id="1.10.510.10">
    <property type="entry name" value="Transferase(Phosphotransferase) domain 1"/>
    <property type="match status" value="1"/>
</dbReference>
<dbReference type="InterPro" id="IPR011009">
    <property type="entry name" value="Kinase-like_dom_sf"/>
</dbReference>
<dbReference type="InterPro" id="IPR051511">
    <property type="entry name" value="MitoQC_Scaffold_Kinases"/>
</dbReference>
<dbReference type="InterPro" id="IPR000719">
    <property type="entry name" value="Prot_kinase_dom"/>
</dbReference>
<dbReference type="InterPro" id="IPR008266">
    <property type="entry name" value="Tyr_kinase_AS"/>
</dbReference>
<dbReference type="PANTHER" id="PTHR22972:SF3">
    <property type="entry name" value="INACTIVE TYROSINE-PROTEIN KINASE PRAG1"/>
    <property type="match status" value="1"/>
</dbReference>
<dbReference type="PANTHER" id="PTHR22972">
    <property type="entry name" value="SERINE/THREONINE PROTEIN KINASE"/>
    <property type="match status" value="1"/>
</dbReference>
<dbReference type="Pfam" id="PF00069">
    <property type="entry name" value="Pkinase"/>
    <property type="match status" value="1"/>
</dbReference>
<dbReference type="SMART" id="SM00220">
    <property type="entry name" value="S_TKc"/>
    <property type="match status" value="1"/>
</dbReference>
<dbReference type="SUPFAM" id="SSF56112">
    <property type="entry name" value="Protein kinase-like (PK-like)"/>
    <property type="match status" value="1"/>
</dbReference>
<dbReference type="PROSITE" id="PS50011">
    <property type="entry name" value="PROTEIN_KINASE_DOM"/>
    <property type="match status" value="1"/>
</dbReference>
<dbReference type="PROSITE" id="PS00109">
    <property type="entry name" value="PROTEIN_KINASE_TYR"/>
    <property type="match status" value="1"/>
</dbReference>
<name>PRAG1_RAT</name>
<accession>D3ZMK9</accession>
<reference key="1">
    <citation type="journal article" date="2004" name="Nature">
        <title>Genome sequence of the Brown Norway rat yields insights into mammalian evolution.</title>
        <authorList>
            <person name="Gibbs R.A."/>
            <person name="Weinstock G.M."/>
            <person name="Metzker M.L."/>
            <person name="Muzny D.M."/>
            <person name="Sodergren E.J."/>
            <person name="Scherer S."/>
            <person name="Scott G."/>
            <person name="Steffen D."/>
            <person name="Worley K.C."/>
            <person name="Burch P.E."/>
            <person name="Okwuonu G."/>
            <person name="Hines S."/>
            <person name="Lewis L."/>
            <person name="Deramo C."/>
            <person name="Delgado O."/>
            <person name="Dugan-Rocha S."/>
            <person name="Miner G."/>
            <person name="Morgan M."/>
            <person name="Hawes A."/>
            <person name="Gill R."/>
            <person name="Holt R.A."/>
            <person name="Adams M.D."/>
            <person name="Amanatides P.G."/>
            <person name="Baden-Tillson H."/>
            <person name="Barnstead M."/>
            <person name="Chin S."/>
            <person name="Evans C.A."/>
            <person name="Ferriera S."/>
            <person name="Fosler C."/>
            <person name="Glodek A."/>
            <person name="Gu Z."/>
            <person name="Jennings D."/>
            <person name="Kraft C.L."/>
            <person name="Nguyen T."/>
            <person name="Pfannkoch C.M."/>
            <person name="Sitter C."/>
            <person name="Sutton G.G."/>
            <person name="Venter J.C."/>
            <person name="Woodage T."/>
            <person name="Smith D."/>
            <person name="Lee H.-M."/>
            <person name="Gustafson E."/>
            <person name="Cahill P."/>
            <person name="Kana A."/>
            <person name="Doucette-Stamm L."/>
            <person name="Weinstock K."/>
            <person name="Fechtel K."/>
            <person name="Weiss R.B."/>
            <person name="Dunn D.M."/>
            <person name="Green E.D."/>
            <person name="Blakesley R.W."/>
            <person name="Bouffard G.G."/>
            <person name="De Jong P.J."/>
            <person name="Osoegawa K."/>
            <person name="Zhu B."/>
            <person name="Marra M."/>
            <person name="Schein J."/>
            <person name="Bosdet I."/>
            <person name="Fjell C."/>
            <person name="Jones S."/>
            <person name="Krzywinski M."/>
            <person name="Mathewson C."/>
            <person name="Siddiqui A."/>
            <person name="Wye N."/>
            <person name="McPherson J."/>
            <person name="Zhao S."/>
            <person name="Fraser C.M."/>
            <person name="Shetty J."/>
            <person name="Shatsman S."/>
            <person name="Geer K."/>
            <person name="Chen Y."/>
            <person name="Abramzon S."/>
            <person name="Nierman W.C."/>
            <person name="Havlak P.H."/>
            <person name="Chen R."/>
            <person name="Durbin K.J."/>
            <person name="Egan A."/>
            <person name="Ren Y."/>
            <person name="Song X.-Z."/>
            <person name="Li B."/>
            <person name="Liu Y."/>
            <person name="Qin X."/>
            <person name="Cawley S."/>
            <person name="Cooney A.J."/>
            <person name="D'Souza L.M."/>
            <person name="Martin K."/>
            <person name="Wu J.Q."/>
            <person name="Gonzalez-Garay M.L."/>
            <person name="Jackson A.R."/>
            <person name="Kalafus K.J."/>
            <person name="McLeod M.P."/>
            <person name="Milosavljevic A."/>
            <person name="Virk D."/>
            <person name="Volkov A."/>
            <person name="Wheeler D.A."/>
            <person name="Zhang Z."/>
            <person name="Bailey J.A."/>
            <person name="Eichler E.E."/>
            <person name="Tuzun E."/>
            <person name="Birney E."/>
            <person name="Mongin E."/>
            <person name="Ureta-Vidal A."/>
            <person name="Woodwark C."/>
            <person name="Zdobnov E."/>
            <person name="Bork P."/>
            <person name="Suyama M."/>
            <person name="Torrents D."/>
            <person name="Alexandersson M."/>
            <person name="Trask B.J."/>
            <person name="Young J.M."/>
            <person name="Huang H."/>
            <person name="Wang H."/>
            <person name="Xing H."/>
            <person name="Daniels S."/>
            <person name="Gietzen D."/>
            <person name="Schmidt J."/>
            <person name="Stevens K."/>
            <person name="Vitt U."/>
            <person name="Wingrove J."/>
            <person name="Camara F."/>
            <person name="Mar Alba M."/>
            <person name="Abril J.F."/>
            <person name="Guigo R."/>
            <person name="Smit A."/>
            <person name="Dubchak I."/>
            <person name="Rubin E.M."/>
            <person name="Couronne O."/>
            <person name="Poliakov A."/>
            <person name="Huebner N."/>
            <person name="Ganten D."/>
            <person name="Goesele C."/>
            <person name="Hummel O."/>
            <person name="Kreitler T."/>
            <person name="Lee Y.-A."/>
            <person name="Monti J."/>
            <person name="Schulz H."/>
            <person name="Zimdahl H."/>
            <person name="Himmelbauer H."/>
            <person name="Lehrach H."/>
            <person name="Jacob H.J."/>
            <person name="Bromberg S."/>
            <person name="Gullings-Handley J."/>
            <person name="Jensen-Seaman M.I."/>
            <person name="Kwitek A.E."/>
            <person name="Lazar J."/>
            <person name="Pasko D."/>
            <person name="Tonellato P.J."/>
            <person name="Twigger S."/>
            <person name="Ponting C.P."/>
            <person name="Duarte J.M."/>
            <person name="Rice S."/>
            <person name="Goodstadt L."/>
            <person name="Beatson S.A."/>
            <person name="Emes R.D."/>
            <person name="Winter E.E."/>
            <person name="Webber C."/>
            <person name="Brandt P."/>
            <person name="Nyakatura G."/>
            <person name="Adetobi M."/>
            <person name="Chiaromonte F."/>
            <person name="Elnitski L."/>
            <person name="Eswara P."/>
            <person name="Hardison R.C."/>
            <person name="Hou M."/>
            <person name="Kolbe D."/>
            <person name="Makova K."/>
            <person name="Miller W."/>
            <person name="Nekrutenko A."/>
            <person name="Riemer C."/>
            <person name="Schwartz S."/>
            <person name="Taylor J."/>
            <person name="Yang S."/>
            <person name="Zhang Y."/>
            <person name="Lindpaintner K."/>
            <person name="Andrews T.D."/>
            <person name="Caccamo M."/>
            <person name="Clamp M."/>
            <person name="Clarke L."/>
            <person name="Curwen V."/>
            <person name="Durbin R.M."/>
            <person name="Eyras E."/>
            <person name="Searle S.M."/>
            <person name="Cooper G.M."/>
            <person name="Batzoglou S."/>
            <person name="Brudno M."/>
            <person name="Sidow A."/>
            <person name="Stone E.A."/>
            <person name="Payseur B.A."/>
            <person name="Bourque G."/>
            <person name="Lopez-Otin C."/>
            <person name="Puente X.S."/>
            <person name="Chakrabarti K."/>
            <person name="Chatterji S."/>
            <person name="Dewey C."/>
            <person name="Pachter L."/>
            <person name="Bray N."/>
            <person name="Yap V.B."/>
            <person name="Caspi A."/>
            <person name="Tesler G."/>
            <person name="Pevzner P.A."/>
            <person name="Haussler D."/>
            <person name="Roskin K.M."/>
            <person name="Baertsch R."/>
            <person name="Clawson H."/>
            <person name="Furey T.S."/>
            <person name="Hinrichs A.S."/>
            <person name="Karolchik D."/>
            <person name="Kent W.J."/>
            <person name="Rosenbloom K.R."/>
            <person name="Trumbower H."/>
            <person name="Weirauch M."/>
            <person name="Cooper D.N."/>
            <person name="Stenson P.D."/>
            <person name="Ma B."/>
            <person name="Brent M."/>
            <person name="Arumugam M."/>
            <person name="Shteynberg D."/>
            <person name="Copley R.R."/>
            <person name="Taylor M.S."/>
            <person name="Riethman H."/>
            <person name="Mudunuri U."/>
            <person name="Peterson J."/>
            <person name="Guyer M."/>
            <person name="Felsenfeld A."/>
            <person name="Old S."/>
            <person name="Mockrin S."/>
            <person name="Collins F.S."/>
        </authorList>
    </citation>
    <scope>NUCLEOTIDE SEQUENCE [LARGE SCALE GENOMIC DNA]</scope>
    <source>
        <strain>Brown Norway</strain>
    </source>
</reference>
<reference key="2">
    <citation type="submission" date="2005-09" db="EMBL/GenBank/DDBJ databases">
        <authorList>
            <person name="Mural R.J."/>
            <person name="Adams M.D."/>
            <person name="Myers E.W."/>
            <person name="Smith H.O."/>
            <person name="Venter J.C."/>
        </authorList>
    </citation>
    <scope>NUCLEOTIDE SEQUENCE [LARGE SCALE GENOMIC DNA]</scope>
</reference>
<reference key="3">
    <citation type="journal article" date="2006" name="J. Biol. Chem.">
        <title>Pragmin, a novel effector of Rnd2 GTPase, stimulates RhoA activity.</title>
        <authorList>
            <person name="Tanaka H."/>
            <person name="Katoh H."/>
            <person name="Negishi M."/>
        </authorList>
    </citation>
    <scope>TISSUE SPECIFICITY</scope>
    <scope>FUNCTION</scope>
    <scope>INTERACTION WITH RND2</scope>
</reference>
<reference key="4">
    <citation type="journal article" date="2011" name="Proc. Natl. Acad. Sci. U.S.A.">
        <title>Mammalian Pragmin regulates Src family kinases via the Glu-Pro-Ile-Tyr-Ala (EPIYA) motif that is exploited by bacterial effectors.</title>
        <authorList>
            <person name="Safari F."/>
            <person name="Murata-Kamiya N."/>
            <person name="Saito Y."/>
            <person name="Hatakeyama M."/>
        </authorList>
    </citation>
    <scope>SUBCELLULAR LOCATION</scope>
    <scope>PHOSPHORYLATION AT TYR-391</scope>
    <scope>MUTAGENESIS OF TYR-391</scope>
    <scope>INTERACTION WITH CSK</scope>
</reference>
<reference key="5">
    <citation type="journal article" date="2016" name="Cancer Sci.">
        <title>C-terminal Src kinase-mediated EPIYA phosphorylation of Pragmin creates a feed-forward C-terminal Src kinase activation loop that promotes cell motility.</title>
        <authorList>
            <person name="Senda Y."/>
            <person name="Murata-Kamiya N."/>
            <person name="Hatakeyama M."/>
        </authorList>
    </citation>
    <scope>INTERACTION WITH CSK</scope>
    <scope>PHOSPHORYLATION AT TYR-391; TYR-238 AND TYR-343</scope>
    <scope>SUBCELLULAR LOCATION</scope>
    <scope>FUNCTION</scope>
</reference>
<reference evidence="13" key="6">
    <citation type="journal article" date="2012" name="Nat. Commun.">
        <title>Quantitative maps of protein phosphorylation sites across 14 different rat organs and tissues.</title>
        <authorList>
            <person name="Lundby A."/>
            <person name="Secher A."/>
            <person name="Lage K."/>
            <person name="Nordsborg N.B."/>
            <person name="Dmytriyev A."/>
            <person name="Lundby C."/>
            <person name="Olsen J.V."/>
        </authorList>
    </citation>
    <scope>IDENTIFICATION BY MASS SPECTROMETRY [LARGE SCALE ANALYSIS]</scope>
</reference>
<reference evidence="12" key="7">
    <citation type="journal article" date="2018" name="Structure">
        <title>Dimerization of the Pragmin pseudo-kinase regulates protein tyrosine phosphorylation.</title>
        <authorList>
            <person name="Lecointre C."/>
            <person name="Simon V."/>
            <person name="Kerneur C."/>
            <person name="Allemand F."/>
            <person name="Fournet A."/>
            <person name="Montarras I."/>
            <person name="Pons J.L."/>
            <person name="Gelin M."/>
            <person name="Brignatz C."/>
            <person name="Urbach S."/>
            <person name="Labesse G."/>
            <person name="Roche S."/>
        </authorList>
    </citation>
    <scope>X-RAY CRYSTALLOGRAPHY (2.77 ANGSTROMS) OF 906-1368</scope>
    <scope>MUTAGENESIS OF TYR-391; LEU-939; ASP-978; TYR-981; LYS-997; GLN-1021; ALA-1329; TYR-1349 AND LEU-1362</scope>
    <scope>SUBUNIT</scope>
    <scope>INTERACTION WITH CSK</scope>
    <scope>PHOSPHORYLATION AT TYR-391</scope>
    <scope>DOMAIN</scope>
    <scope>LACK OF ATP-BINDING</scope>
    <scope>FUNCTION</scope>
</reference>
<proteinExistence type="evidence at protein level"/>
<evidence type="ECO:0000250" key="1">
    <source>
        <dbReference type="UniProtKB" id="Q571I4"/>
    </source>
</evidence>
<evidence type="ECO:0000250" key="2">
    <source>
        <dbReference type="UniProtKB" id="Q86YV5"/>
    </source>
</evidence>
<evidence type="ECO:0000255" key="3">
    <source>
        <dbReference type="PROSITE-ProRule" id="PRU00159"/>
    </source>
</evidence>
<evidence type="ECO:0000256" key="4">
    <source>
        <dbReference type="SAM" id="MobiDB-lite"/>
    </source>
</evidence>
<evidence type="ECO:0000269" key="5">
    <source>
    </source>
</evidence>
<evidence type="ECO:0000269" key="6">
    <source>
    </source>
</evidence>
<evidence type="ECO:0000269" key="7">
    <source>
    </source>
</evidence>
<evidence type="ECO:0000269" key="8">
    <source>
    </source>
</evidence>
<evidence type="ECO:0000303" key="9">
    <source>
    </source>
</evidence>
<evidence type="ECO:0000305" key="10"/>
<evidence type="ECO:0000312" key="11">
    <source>
        <dbReference type="RGD" id="1311793"/>
    </source>
</evidence>
<evidence type="ECO:0007744" key="12">
    <source>
        <dbReference type="PDB" id="6EWX"/>
    </source>
</evidence>
<evidence type="ECO:0007744" key="13">
    <source>
    </source>
</evidence>
<evidence type="ECO:0007829" key="14">
    <source>
        <dbReference type="PDB" id="6EWX"/>
    </source>
</evidence>
<keyword id="KW-0002">3D-structure</keyword>
<keyword id="KW-0965">Cell junction</keyword>
<keyword id="KW-0963">Cytoplasm</keyword>
<keyword id="KW-0539">Nucleus</keyword>
<keyword id="KW-0597">Phosphoprotein</keyword>
<keyword id="KW-1185">Reference proteome</keyword>